<gene>
    <name type="primary">ESR2</name>
    <name type="synonym">NR3A2</name>
</gene>
<evidence type="ECO:0000250" key="1">
    <source>
        <dbReference type="UniProtKB" id="O08537"/>
    </source>
</evidence>
<evidence type="ECO:0000250" key="2">
    <source>
        <dbReference type="UniProtKB" id="Q62986"/>
    </source>
</evidence>
<evidence type="ECO:0000250" key="3">
    <source>
        <dbReference type="UniProtKB" id="Q92731"/>
    </source>
</evidence>
<evidence type="ECO:0000255" key="4">
    <source>
        <dbReference type="PROSITE-ProRule" id="PRU01189"/>
    </source>
</evidence>
<evidence type="ECO:0000305" key="5"/>
<reference key="1">
    <citation type="journal article" date="2000" name="Am. J. Physiol.">
        <title>Differential distribution of ERalpha and ERbeta mRNA in intrauterine tissues of the pregnant rhesus monkey.</title>
        <authorList>
            <person name="Wu W.X."/>
            <person name="Ma X.H."/>
            <person name="Smith G.C.S."/>
            <person name="Nathanielsz P.W."/>
        </authorList>
    </citation>
    <scope>NUCLEOTIDE SEQUENCE [MRNA]</scope>
</reference>
<dbReference type="EMBL" id="AF119229">
    <property type="protein sequence ID" value="AAD54069.1"/>
    <property type="molecule type" value="mRNA"/>
</dbReference>
<dbReference type="SMR" id="Q9TTE5"/>
<dbReference type="STRING" id="9544.ENSMMUP00000030076"/>
<dbReference type="PaxDb" id="9544-ENSMMUP00000030079"/>
<dbReference type="eggNOG" id="KOG3575">
    <property type="taxonomic scope" value="Eukaryota"/>
</dbReference>
<dbReference type="InParanoid" id="Q9TTE5"/>
<dbReference type="Proteomes" id="UP000006718">
    <property type="component" value="Unassembled WGS sequence"/>
</dbReference>
<dbReference type="GO" id="GO:0000785">
    <property type="term" value="C:chromatin"/>
    <property type="evidence" value="ECO:0000318"/>
    <property type="project" value="GO_Central"/>
</dbReference>
<dbReference type="GO" id="GO:0005654">
    <property type="term" value="C:nucleoplasm"/>
    <property type="evidence" value="ECO:0007669"/>
    <property type="project" value="UniProtKB-ARBA"/>
</dbReference>
<dbReference type="GO" id="GO:0005634">
    <property type="term" value="C:nucleus"/>
    <property type="evidence" value="ECO:0000250"/>
    <property type="project" value="UniProtKB"/>
</dbReference>
<dbReference type="GO" id="GO:0034056">
    <property type="term" value="F:estrogen response element binding"/>
    <property type="evidence" value="ECO:0000318"/>
    <property type="project" value="GO_Central"/>
</dbReference>
<dbReference type="GO" id="GO:0004879">
    <property type="term" value="F:nuclear receptor activity"/>
    <property type="evidence" value="ECO:0000318"/>
    <property type="project" value="GO_Central"/>
</dbReference>
<dbReference type="GO" id="GO:0005496">
    <property type="term" value="F:steroid binding"/>
    <property type="evidence" value="ECO:0000250"/>
    <property type="project" value="UniProtKB"/>
</dbReference>
<dbReference type="GO" id="GO:0008270">
    <property type="term" value="F:zinc ion binding"/>
    <property type="evidence" value="ECO:0007669"/>
    <property type="project" value="UniProtKB-KW"/>
</dbReference>
<dbReference type="GO" id="GO:0030520">
    <property type="term" value="P:estrogen receptor signaling pathway"/>
    <property type="evidence" value="ECO:0000318"/>
    <property type="project" value="GO_Central"/>
</dbReference>
<dbReference type="GO" id="GO:0051091">
    <property type="term" value="P:positive regulation of DNA-binding transcription factor activity"/>
    <property type="evidence" value="ECO:0000250"/>
    <property type="project" value="UniProtKB"/>
</dbReference>
<dbReference type="GO" id="GO:0045893">
    <property type="term" value="P:positive regulation of DNA-templated transcription"/>
    <property type="evidence" value="ECO:0000250"/>
    <property type="project" value="UniProtKB"/>
</dbReference>
<dbReference type="GO" id="GO:0006357">
    <property type="term" value="P:regulation of transcription by RNA polymerase II"/>
    <property type="evidence" value="ECO:0000318"/>
    <property type="project" value="GO_Central"/>
</dbReference>
<dbReference type="CDD" id="cd06949">
    <property type="entry name" value="NR_LBD_ER"/>
    <property type="match status" value="1"/>
</dbReference>
<dbReference type="FunFam" id="1.10.565.10:FF:000010">
    <property type="entry name" value="Estrogen receptor"/>
    <property type="match status" value="1"/>
</dbReference>
<dbReference type="Gene3D" id="1.10.565.10">
    <property type="entry name" value="Retinoid X Receptor"/>
    <property type="match status" value="1"/>
</dbReference>
<dbReference type="InterPro" id="IPR035500">
    <property type="entry name" value="NHR-like_dom_sf"/>
</dbReference>
<dbReference type="InterPro" id="IPR000536">
    <property type="entry name" value="Nucl_hrmn_rcpt_lig-bd"/>
</dbReference>
<dbReference type="InterPro" id="IPR050200">
    <property type="entry name" value="Nuclear_hormone_rcpt_NR3"/>
</dbReference>
<dbReference type="InterPro" id="IPR001723">
    <property type="entry name" value="Nuclear_hrmn_rcpt"/>
</dbReference>
<dbReference type="PANTHER" id="PTHR48092">
    <property type="entry name" value="KNIRPS-RELATED PROTEIN-RELATED"/>
    <property type="match status" value="1"/>
</dbReference>
<dbReference type="Pfam" id="PF00104">
    <property type="entry name" value="Hormone_recep"/>
    <property type="match status" value="1"/>
</dbReference>
<dbReference type="PRINTS" id="PR00398">
    <property type="entry name" value="STRDHORMONER"/>
</dbReference>
<dbReference type="SMART" id="SM00430">
    <property type="entry name" value="HOLI"/>
    <property type="match status" value="1"/>
</dbReference>
<dbReference type="SUPFAM" id="SSF48508">
    <property type="entry name" value="Nuclear receptor ligand-binding domain"/>
    <property type="match status" value="1"/>
</dbReference>
<dbReference type="PROSITE" id="PS51843">
    <property type="entry name" value="NR_LBD"/>
    <property type="match status" value="1"/>
</dbReference>
<feature type="chain" id="PRO_0000053643" description="Estrogen receptor beta">
    <location>
        <begin position="1" status="less than"/>
        <end position="279" status="greater than"/>
    </location>
</feature>
<feature type="domain" description="NR LBD" evidence="4">
    <location>
        <begin position="27"/>
        <end position="261"/>
    </location>
</feature>
<feature type="non-terminal residue">
    <location>
        <position position="1"/>
    </location>
</feature>
<feature type="non-terminal residue">
    <location>
        <position position="279"/>
    </location>
</feature>
<keyword id="KW-0010">Activator</keyword>
<keyword id="KW-0238">DNA-binding</keyword>
<keyword id="KW-0446">Lipid-binding</keyword>
<keyword id="KW-0479">Metal-binding</keyword>
<keyword id="KW-0539">Nucleus</keyword>
<keyword id="KW-0675">Receptor</keyword>
<keyword id="KW-1185">Reference proteome</keyword>
<keyword id="KW-0754">Steroid-binding</keyword>
<keyword id="KW-0804">Transcription</keyword>
<keyword id="KW-0805">Transcription regulation</keyword>
<keyword id="KW-0862">Zinc</keyword>
<keyword id="KW-0863">Zinc-finger</keyword>
<name>ESR2_MACMU</name>
<organism>
    <name type="scientific">Macaca mulatta</name>
    <name type="common">Rhesus macaque</name>
    <dbReference type="NCBI Taxonomy" id="9544"/>
    <lineage>
        <taxon>Eukaryota</taxon>
        <taxon>Metazoa</taxon>
        <taxon>Chordata</taxon>
        <taxon>Craniata</taxon>
        <taxon>Vertebrata</taxon>
        <taxon>Euteleostomi</taxon>
        <taxon>Mammalia</taxon>
        <taxon>Eutheria</taxon>
        <taxon>Euarchontoglires</taxon>
        <taxon>Primates</taxon>
        <taxon>Haplorrhini</taxon>
        <taxon>Catarrhini</taxon>
        <taxon>Cercopithecidae</taxon>
        <taxon>Cercopithecinae</taxon>
        <taxon>Macaca</taxon>
    </lineage>
</organism>
<proteinExistence type="evidence at transcript level"/>
<protein>
    <recommendedName>
        <fullName>Estrogen receptor beta</fullName>
        <shortName>ER-beta</shortName>
    </recommendedName>
    <alternativeName>
        <fullName>Nuclear receptor subfamily 3 group A member 2</fullName>
    </alternativeName>
</protein>
<comment type="function">
    <text evidence="3">Nuclear hormone receptor. Binds estrogens with an affinity similar to that of ESR1/ER-alpha, and activates expression of reporter genes containing estrogen response elements (ERE) in an estrogen-dependent manner.</text>
</comment>
<comment type="subunit">
    <text evidence="1 2 3">Binds DNA as a homodimer. Can form a heterodimer with ESR1. Interacts with NCOA1, NCOA3, NCOA5 and NCOA6 coactivators, leading to a strong increase of transcription of target genes. Interacts with UBE1C and AKAP13. Interacts with DNTTIP2. Interacts with CCDC62 in the presence of estradiol/E2; this interaction seems to enhance the transcription of target genes. Interacts with DNAAF4. Interacts with PRMT2. Interacts with CCAR2 (via N-terminus) in a ligand-independent manner. Interacts with RBM39, in the presence of estradiol (E2). Interacts with STUB1/CHIP (By similarity).</text>
</comment>
<comment type="subcellular location">
    <subcellularLocation>
        <location evidence="3">Nucleus</location>
    </subcellularLocation>
</comment>
<comment type="domain">
    <text>Composed of three domains: a modulating N-terminal domain, a DNA-binding domain and a C-terminal ligand-binding domain.</text>
</comment>
<comment type="similarity">
    <text evidence="5">Belongs to the nuclear hormone receptor family. NR3 subfamily.</text>
</comment>
<accession>Q9TTE5</accession>
<sequence>QLHCAGKAKRSGSHAPLVRELLLDALSPEQLVLTLLEAEPPHVLISRPSAPFTEASMMMSLTKLADKELVHMISWAKKIPGFVELSLFDQVRLLESCWMEVLMVGLMWRSIDHPGKLIFAPDLVLDRDEGKCVEGILEIFDMLLATTSRFRELKLQHKEYLCVKAMILLNSNMYPLVTATQDADSSRKLAHLLNAVTDALVWVIAKSGISSQQQSMRLANLLMLLSHVRHASNKGMEHLLSMKCKNVVPVYDLLLEMLNAHVLRGCKSSITGSECSPAE</sequence>